<sequence length="105" mass="11826">MKQQKQKIRIRLKGFDQGQLDRSTADIVETAKRTGARVAGPIPLPTKREVYTVLRSPHVDKKSREQFEIRTHKRLIDILDPTGKTIDALKMLALPAGVDIKIKAA</sequence>
<proteinExistence type="inferred from homology"/>
<organism>
    <name type="scientific">Chlamydia abortus (strain DSM 27085 / S26/3)</name>
    <name type="common">Chlamydophila abortus</name>
    <dbReference type="NCBI Taxonomy" id="218497"/>
    <lineage>
        <taxon>Bacteria</taxon>
        <taxon>Pseudomonadati</taxon>
        <taxon>Chlamydiota</taxon>
        <taxon>Chlamydiia</taxon>
        <taxon>Chlamydiales</taxon>
        <taxon>Chlamydiaceae</taxon>
        <taxon>Chlamydia/Chlamydophila group</taxon>
        <taxon>Chlamydia</taxon>
    </lineage>
</organism>
<protein>
    <recommendedName>
        <fullName evidence="1">Small ribosomal subunit protein uS10</fullName>
    </recommendedName>
    <alternativeName>
        <fullName evidence="2">30S ribosomal protein S10</fullName>
    </alternativeName>
</protein>
<keyword id="KW-0687">Ribonucleoprotein</keyword>
<keyword id="KW-0689">Ribosomal protein</keyword>
<feature type="chain" id="PRO_0000237031" description="Small ribosomal subunit protein uS10">
    <location>
        <begin position="1"/>
        <end position="105"/>
    </location>
</feature>
<comment type="function">
    <text evidence="1">Involved in the binding of tRNA to the ribosomes.</text>
</comment>
<comment type="subunit">
    <text evidence="1">Part of the 30S ribosomal subunit.</text>
</comment>
<comment type="similarity">
    <text evidence="1">Belongs to the universal ribosomal protein uS10 family.</text>
</comment>
<comment type="sequence caution" evidence="2">
    <conflict type="erroneous initiation">
        <sequence resource="EMBL-CDS" id="CAH63647"/>
    </conflict>
</comment>
<evidence type="ECO:0000255" key="1">
    <source>
        <dbReference type="HAMAP-Rule" id="MF_00508"/>
    </source>
</evidence>
<evidence type="ECO:0000305" key="2"/>
<name>RS10_CHLAB</name>
<reference key="1">
    <citation type="journal article" date="2005" name="Genome Res.">
        <title>The Chlamydophila abortus genome sequence reveals an array of variable proteins that contribute to interspecies variation.</title>
        <authorList>
            <person name="Thomson N.R."/>
            <person name="Yeats C."/>
            <person name="Bell K."/>
            <person name="Holden M.T.G."/>
            <person name="Bentley S.D."/>
            <person name="Livingstone M."/>
            <person name="Cerdeno-Tarraga A.-M."/>
            <person name="Harris B."/>
            <person name="Doggett J."/>
            <person name="Ormond D."/>
            <person name="Mungall K."/>
            <person name="Clarke K."/>
            <person name="Feltwell T."/>
            <person name="Hance Z."/>
            <person name="Sanders M."/>
            <person name="Quail M.A."/>
            <person name="Price C."/>
            <person name="Barrell B.G."/>
            <person name="Parkhill J."/>
            <person name="Longbottom D."/>
        </authorList>
    </citation>
    <scope>NUCLEOTIDE SEQUENCE [LARGE SCALE GENOMIC DNA]</scope>
    <source>
        <strain>DSM 27085 / S26/3</strain>
    </source>
</reference>
<accession>Q5L6S4</accession>
<gene>
    <name evidence="1" type="primary">rpsJ</name>
    <name type="ordered locus">CAB189</name>
</gene>
<dbReference type="EMBL" id="CR848038">
    <property type="protein sequence ID" value="CAH63647.1"/>
    <property type="status" value="ALT_INIT"/>
    <property type="molecule type" value="Genomic_DNA"/>
</dbReference>
<dbReference type="RefSeq" id="WP_006342871.1">
    <property type="nucleotide sequence ID" value="NC_004552.2"/>
</dbReference>
<dbReference type="SMR" id="Q5L6S4"/>
<dbReference type="GeneID" id="93024745"/>
<dbReference type="KEGG" id="cab:CAB189"/>
<dbReference type="eggNOG" id="COG0051">
    <property type="taxonomic scope" value="Bacteria"/>
</dbReference>
<dbReference type="HOGENOM" id="CLU_122625_1_3_0"/>
<dbReference type="OrthoDB" id="9804464at2"/>
<dbReference type="Proteomes" id="UP000001012">
    <property type="component" value="Chromosome"/>
</dbReference>
<dbReference type="GO" id="GO:1990904">
    <property type="term" value="C:ribonucleoprotein complex"/>
    <property type="evidence" value="ECO:0007669"/>
    <property type="project" value="UniProtKB-KW"/>
</dbReference>
<dbReference type="GO" id="GO:0005840">
    <property type="term" value="C:ribosome"/>
    <property type="evidence" value="ECO:0007669"/>
    <property type="project" value="UniProtKB-KW"/>
</dbReference>
<dbReference type="GO" id="GO:0003735">
    <property type="term" value="F:structural constituent of ribosome"/>
    <property type="evidence" value="ECO:0007669"/>
    <property type="project" value="InterPro"/>
</dbReference>
<dbReference type="GO" id="GO:0000049">
    <property type="term" value="F:tRNA binding"/>
    <property type="evidence" value="ECO:0007669"/>
    <property type="project" value="UniProtKB-UniRule"/>
</dbReference>
<dbReference type="GO" id="GO:0006412">
    <property type="term" value="P:translation"/>
    <property type="evidence" value="ECO:0007669"/>
    <property type="project" value="UniProtKB-UniRule"/>
</dbReference>
<dbReference type="FunFam" id="3.30.70.600:FF:000001">
    <property type="entry name" value="30S ribosomal protein S10"/>
    <property type="match status" value="1"/>
</dbReference>
<dbReference type="Gene3D" id="3.30.70.600">
    <property type="entry name" value="Ribosomal protein S10 domain"/>
    <property type="match status" value="1"/>
</dbReference>
<dbReference type="HAMAP" id="MF_00508">
    <property type="entry name" value="Ribosomal_uS10"/>
    <property type="match status" value="1"/>
</dbReference>
<dbReference type="InterPro" id="IPR001848">
    <property type="entry name" value="Ribosomal_uS10"/>
</dbReference>
<dbReference type="InterPro" id="IPR018268">
    <property type="entry name" value="Ribosomal_uS10_CS"/>
</dbReference>
<dbReference type="InterPro" id="IPR027486">
    <property type="entry name" value="Ribosomal_uS10_dom"/>
</dbReference>
<dbReference type="InterPro" id="IPR036838">
    <property type="entry name" value="Ribosomal_uS10_dom_sf"/>
</dbReference>
<dbReference type="NCBIfam" id="NF001861">
    <property type="entry name" value="PRK00596.1"/>
    <property type="match status" value="1"/>
</dbReference>
<dbReference type="NCBIfam" id="TIGR01049">
    <property type="entry name" value="rpsJ_bact"/>
    <property type="match status" value="1"/>
</dbReference>
<dbReference type="PANTHER" id="PTHR11700">
    <property type="entry name" value="30S RIBOSOMAL PROTEIN S10 FAMILY MEMBER"/>
    <property type="match status" value="1"/>
</dbReference>
<dbReference type="Pfam" id="PF00338">
    <property type="entry name" value="Ribosomal_S10"/>
    <property type="match status" value="1"/>
</dbReference>
<dbReference type="PRINTS" id="PR00971">
    <property type="entry name" value="RIBOSOMALS10"/>
</dbReference>
<dbReference type="SMART" id="SM01403">
    <property type="entry name" value="Ribosomal_S10"/>
    <property type="match status" value="1"/>
</dbReference>
<dbReference type="SUPFAM" id="SSF54999">
    <property type="entry name" value="Ribosomal protein S10"/>
    <property type="match status" value="1"/>
</dbReference>
<dbReference type="PROSITE" id="PS00361">
    <property type="entry name" value="RIBOSOMAL_S10"/>
    <property type="match status" value="1"/>
</dbReference>